<keyword id="KW-0012">Acyltransferase</keyword>
<keyword id="KW-0133">Cell shape</keyword>
<keyword id="KW-0961">Cell wall biogenesis/degradation</keyword>
<keyword id="KW-0963">Cytoplasm</keyword>
<keyword id="KW-0460">Magnesium</keyword>
<keyword id="KW-0479">Metal-binding</keyword>
<keyword id="KW-0511">Multifunctional enzyme</keyword>
<keyword id="KW-0548">Nucleotidyltransferase</keyword>
<keyword id="KW-0573">Peptidoglycan synthesis</keyword>
<keyword id="KW-0677">Repeat</keyword>
<keyword id="KW-0808">Transferase</keyword>
<name>GLMU_MARMS</name>
<reference key="1">
    <citation type="submission" date="2007-06" db="EMBL/GenBank/DDBJ databases">
        <title>Complete sequence of Marinomonas sp. MWYL1.</title>
        <authorList>
            <consortium name="US DOE Joint Genome Institute"/>
            <person name="Copeland A."/>
            <person name="Lucas S."/>
            <person name="Lapidus A."/>
            <person name="Barry K."/>
            <person name="Glavina del Rio T."/>
            <person name="Dalin E."/>
            <person name="Tice H."/>
            <person name="Pitluck S."/>
            <person name="Kiss H."/>
            <person name="Brettin T."/>
            <person name="Bruce D."/>
            <person name="Detter J.C."/>
            <person name="Han C."/>
            <person name="Schmutz J."/>
            <person name="Larimer F."/>
            <person name="Land M."/>
            <person name="Hauser L."/>
            <person name="Kyrpides N."/>
            <person name="Kim E."/>
            <person name="Johnston A.W.B."/>
            <person name="Todd J.D."/>
            <person name="Rogers R."/>
            <person name="Wexler M."/>
            <person name="Bond P.L."/>
            <person name="Li Y."/>
            <person name="Richardson P."/>
        </authorList>
    </citation>
    <scope>NUCLEOTIDE SEQUENCE [LARGE SCALE GENOMIC DNA]</scope>
    <source>
        <strain>MWYL1</strain>
    </source>
</reference>
<evidence type="ECO:0000255" key="1">
    <source>
        <dbReference type="HAMAP-Rule" id="MF_01631"/>
    </source>
</evidence>
<proteinExistence type="inferred from homology"/>
<organism>
    <name type="scientific">Marinomonas sp. (strain MWYL1)</name>
    <dbReference type="NCBI Taxonomy" id="400668"/>
    <lineage>
        <taxon>Bacteria</taxon>
        <taxon>Pseudomonadati</taxon>
        <taxon>Pseudomonadota</taxon>
        <taxon>Gammaproteobacteria</taxon>
        <taxon>Oceanospirillales</taxon>
        <taxon>Oceanospirillaceae</taxon>
        <taxon>Marinomonas</taxon>
    </lineage>
</organism>
<dbReference type="EC" id="2.7.7.23" evidence="1"/>
<dbReference type="EC" id="2.3.1.157" evidence="1"/>
<dbReference type="EMBL" id="CP000749">
    <property type="protein sequence ID" value="ABR69705.1"/>
    <property type="molecule type" value="Genomic_DNA"/>
</dbReference>
<dbReference type="SMR" id="A6VTC6"/>
<dbReference type="STRING" id="400668.Mmwyl1_0771"/>
<dbReference type="KEGG" id="mmw:Mmwyl1_0771"/>
<dbReference type="eggNOG" id="COG1207">
    <property type="taxonomic scope" value="Bacteria"/>
</dbReference>
<dbReference type="HOGENOM" id="CLU_029499_15_2_6"/>
<dbReference type="OrthoDB" id="9775031at2"/>
<dbReference type="UniPathway" id="UPA00113">
    <property type="reaction ID" value="UER00532"/>
</dbReference>
<dbReference type="UniPathway" id="UPA00113">
    <property type="reaction ID" value="UER00533"/>
</dbReference>
<dbReference type="UniPathway" id="UPA00973"/>
<dbReference type="GO" id="GO:0005737">
    <property type="term" value="C:cytoplasm"/>
    <property type="evidence" value="ECO:0007669"/>
    <property type="project" value="UniProtKB-SubCell"/>
</dbReference>
<dbReference type="GO" id="GO:0016020">
    <property type="term" value="C:membrane"/>
    <property type="evidence" value="ECO:0007669"/>
    <property type="project" value="GOC"/>
</dbReference>
<dbReference type="GO" id="GO:0019134">
    <property type="term" value="F:glucosamine-1-phosphate N-acetyltransferase activity"/>
    <property type="evidence" value="ECO:0007669"/>
    <property type="project" value="UniProtKB-UniRule"/>
</dbReference>
<dbReference type="GO" id="GO:0000287">
    <property type="term" value="F:magnesium ion binding"/>
    <property type="evidence" value="ECO:0007669"/>
    <property type="project" value="UniProtKB-UniRule"/>
</dbReference>
<dbReference type="GO" id="GO:0003977">
    <property type="term" value="F:UDP-N-acetylglucosamine diphosphorylase activity"/>
    <property type="evidence" value="ECO:0007669"/>
    <property type="project" value="UniProtKB-UniRule"/>
</dbReference>
<dbReference type="GO" id="GO:0000902">
    <property type="term" value="P:cell morphogenesis"/>
    <property type="evidence" value="ECO:0007669"/>
    <property type="project" value="UniProtKB-UniRule"/>
</dbReference>
<dbReference type="GO" id="GO:0071555">
    <property type="term" value="P:cell wall organization"/>
    <property type="evidence" value="ECO:0007669"/>
    <property type="project" value="UniProtKB-KW"/>
</dbReference>
<dbReference type="GO" id="GO:0009245">
    <property type="term" value="P:lipid A biosynthetic process"/>
    <property type="evidence" value="ECO:0007669"/>
    <property type="project" value="UniProtKB-UniRule"/>
</dbReference>
<dbReference type="GO" id="GO:0009252">
    <property type="term" value="P:peptidoglycan biosynthetic process"/>
    <property type="evidence" value="ECO:0007669"/>
    <property type="project" value="UniProtKB-UniRule"/>
</dbReference>
<dbReference type="GO" id="GO:0008360">
    <property type="term" value="P:regulation of cell shape"/>
    <property type="evidence" value="ECO:0007669"/>
    <property type="project" value="UniProtKB-KW"/>
</dbReference>
<dbReference type="GO" id="GO:0006048">
    <property type="term" value="P:UDP-N-acetylglucosamine biosynthetic process"/>
    <property type="evidence" value="ECO:0007669"/>
    <property type="project" value="UniProtKB-UniPathway"/>
</dbReference>
<dbReference type="CDD" id="cd02540">
    <property type="entry name" value="GT2_GlmU_N_bac"/>
    <property type="match status" value="1"/>
</dbReference>
<dbReference type="CDD" id="cd03353">
    <property type="entry name" value="LbH_GlmU_C"/>
    <property type="match status" value="1"/>
</dbReference>
<dbReference type="Gene3D" id="2.160.10.10">
    <property type="entry name" value="Hexapeptide repeat proteins"/>
    <property type="match status" value="1"/>
</dbReference>
<dbReference type="Gene3D" id="3.90.550.10">
    <property type="entry name" value="Spore Coat Polysaccharide Biosynthesis Protein SpsA, Chain A"/>
    <property type="match status" value="1"/>
</dbReference>
<dbReference type="HAMAP" id="MF_01631">
    <property type="entry name" value="GlmU"/>
    <property type="match status" value="1"/>
</dbReference>
<dbReference type="InterPro" id="IPR005882">
    <property type="entry name" value="Bifunctional_GlmU"/>
</dbReference>
<dbReference type="InterPro" id="IPR050065">
    <property type="entry name" value="GlmU-like"/>
</dbReference>
<dbReference type="InterPro" id="IPR038009">
    <property type="entry name" value="GlmU_C_LbH"/>
</dbReference>
<dbReference type="InterPro" id="IPR001451">
    <property type="entry name" value="Hexapep"/>
</dbReference>
<dbReference type="InterPro" id="IPR018357">
    <property type="entry name" value="Hexapep_transf_CS"/>
</dbReference>
<dbReference type="InterPro" id="IPR025877">
    <property type="entry name" value="MobA-like_NTP_Trfase"/>
</dbReference>
<dbReference type="InterPro" id="IPR029044">
    <property type="entry name" value="Nucleotide-diphossugar_trans"/>
</dbReference>
<dbReference type="InterPro" id="IPR011004">
    <property type="entry name" value="Trimer_LpxA-like_sf"/>
</dbReference>
<dbReference type="NCBIfam" id="TIGR01173">
    <property type="entry name" value="glmU"/>
    <property type="match status" value="1"/>
</dbReference>
<dbReference type="PANTHER" id="PTHR43584:SF3">
    <property type="entry name" value="BIFUNCTIONAL PROTEIN GLMU"/>
    <property type="match status" value="1"/>
</dbReference>
<dbReference type="PANTHER" id="PTHR43584">
    <property type="entry name" value="NUCLEOTIDYL TRANSFERASE"/>
    <property type="match status" value="1"/>
</dbReference>
<dbReference type="Pfam" id="PF00132">
    <property type="entry name" value="Hexapep"/>
    <property type="match status" value="1"/>
</dbReference>
<dbReference type="Pfam" id="PF12804">
    <property type="entry name" value="NTP_transf_3"/>
    <property type="match status" value="1"/>
</dbReference>
<dbReference type="SUPFAM" id="SSF53448">
    <property type="entry name" value="Nucleotide-diphospho-sugar transferases"/>
    <property type="match status" value="1"/>
</dbReference>
<dbReference type="SUPFAM" id="SSF51161">
    <property type="entry name" value="Trimeric LpxA-like enzymes"/>
    <property type="match status" value="1"/>
</dbReference>
<dbReference type="PROSITE" id="PS00101">
    <property type="entry name" value="HEXAPEP_TRANSFERASES"/>
    <property type="match status" value="1"/>
</dbReference>
<feature type="chain" id="PRO_1000088134" description="Bifunctional protein GlmU">
    <location>
        <begin position="1"/>
        <end position="453"/>
    </location>
</feature>
<feature type="region of interest" description="Pyrophosphorylase" evidence="1">
    <location>
        <begin position="1"/>
        <end position="227"/>
    </location>
</feature>
<feature type="region of interest" description="Linker" evidence="1">
    <location>
        <begin position="228"/>
        <end position="248"/>
    </location>
</feature>
<feature type="region of interest" description="N-acetyltransferase" evidence="1">
    <location>
        <begin position="249"/>
        <end position="453"/>
    </location>
</feature>
<feature type="active site" description="Proton acceptor" evidence="1">
    <location>
        <position position="361"/>
    </location>
</feature>
<feature type="binding site" evidence="1">
    <location>
        <begin position="8"/>
        <end position="11"/>
    </location>
    <ligand>
        <name>UDP-N-acetyl-alpha-D-glucosamine</name>
        <dbReference type="ChEBI" id="CHEBI:57705"/>
    </ligand>
</feature>
<feature type="binding site" evidence="1">
    <location>
        <position position="22"/>
    </location>
    <ligand>
        <name>UDP-N-acetyl-alpha-D-glucosamine</name>
        <dbReference type="ChEBI" id="CHEBI:57705"/>
    </ligand>
</feature>
<feature type="binding site" evidence="1">
    <location>
        <position position="73"/>
    </location>
    <ligand>
        <name>UDP-N-acetyl-alpha-D-glucosamine</name>
        <dbReference type="ChEBI" id="CHEBI:57705"/>
    </ligand>
</feature>
<feature type="binding site" evidence="1">
    <location>
        <begin position="78"/>
        <end position="79"/>
    </location>
    <ligand>
        <name>UDP-N-acetyl-alpha-D-glucosamine</name>
        <dbReference type="ChEBI" id="CHEBI:57705"/>
    </ligand>
</feature>
<feature type="binding site" evidence="1">
    <location>
        <begin position="100"/>
        <end position="102"/>
    </location>
    <ligand>
        <name>UDP-N-acetyl-alpha-D-glucosamine</name>
        <dbReference type="ChEBI" id="CHEBI:57705"/>
    </ligand>
</feature>
<feature type="binding site" evidence="1">
    <location>
        <position position="102"/>
    </location>
    <ligand>
        <name>Mg(2+)</name>
        <dbReference type="ChEBI" id="CHEBI:18420"/>
    </ligand>
</feature>
<feature type="binding site" evidence="1">
    <location>
        <position position="137"/>
    </location>
    <ligand>
        <name>UDP-N-acetyl-alpha-D-glucosamine</name>
        <dbReference type="ChEBI" id="CHEBI:57705"/>
    </ligand>
</feature>
<feature type="binding site" evidence="1">
    <location>
        <position position="152"/>
    </location>
    <ligand>
        <name>UDP-N-acetyl-alpha-D-glucosamine</name>
        <dbReference type="ChEBI" id="CHEBI:57705"/>
    </ligand>
</feature>
<feature type="binding site" evidence="1">
    <location>
        <position position="167"/>
    </location>
    <ligand>
        <name>UDP-N-acetyl-alpha-D-glucosamine</name>
        <dbReference type="ChEBI" id="CHEBI:57705"/>
    </ligand>
</feature>
<feature type="binding site" evidence="1">
    <location>
        <position position="225"/>
    </location>
    <ligand>
        <name>Mg(2+)</name>
        <dbReference type="ChEBI" id="CHEBI:18420"/>
    </ligand>
</feature>
<feature type="binding site" evidence="1">
    <location>
        <position position="225"/>
    </location>
    <ligand>
        <name>UDP-N-acetyl-alpha-D-glucosamine</name>
        <dbReference type="ChEBI" id="CHEBI:57705"/>
    </ligand>
</feature>
<feature type="binding site" evidence="1">
    <location>
        <position position="331"/>
    </location>
    <ligand>
        <name>UDP-N-acetyl-alpha-D-glucosamine</name>
        <dbReference type="ChEBI" id="CHEBI:57705"/>
    </ligand>
</feature>
<feature type="binding site" evidence="1">
    <location>
        <position position="349"/>
    </location>
    <ligand>
        <name>UDP-N-acetyl-alpha-D-glucosamine</name>
        <dbReference type="ChEBI" id="CHEBI:57705"/>
    </ligand>
</feature>
<feature type="binding site" evidence="1">
    <location>
        <position position="364"/>
    </location>
    <ligand>
        <name>UDP-N-acetyl-alpha-D-glucosamine</name>
        <dbReference type="ChEBI" id="CHEBI:57705"/>
    </ligand>
</feature>
<feature type="binding site" evidence="1">
    <location>
        <position position="375"/>
    </location>
    <ligand>
        <name>UDP-N-acetyl-alpha-D-glucosamine</name>
        <dbReference type="ChEBI" id="CHEBI:57705"/>
    </ligand>
</feature>
<feature type="binding site" evidence="1">
    <location>
        <position position="378"/>
    </location>
    <ligand>
        <name>acetyl-CoA</name>
        <dbReference type="ChEBI" id="CHEBI:57288"/>
    </ligand>
</feature>
<feature type="binding site" evidence="1">
    <location>
        <begin position="384"/>
        <end position="385"/>
    </location>
    <ligand>
        <name>acetyl-CoA</name>
        <dbReference type="ChEBI" id="CHEBI:57288"/>
    </ligand>
</feature>
<feature type="binding site" evidence="1">
    <location>
        <position position="403"/>
    </location>
    <ligand>
        <name>acetyl-CoA</name>
        <dbReference type="ChEBI" id="CHEBI:57288"/>
    </ligand>
</feature>
<feature type="binding site" evidence="1">
    <location>
        <position position="421"/>
    </location>
    <ligand>
        <name>acetyl-CoA</name>
        <dbReference type="ChEBI" id="CHEBI:57288"/>
    </ligand>
</feature>
<feature type="binding site" evidence="1">
    <location>
        <position position="438"/>
    </location>
    <ligand>
        <name>acetyl-CoA</name>
        <dbReference type="ChEBI" id="CHEBI:57288"/>
    </ligand>
</feature>
<accession>A6VTC6</accession>
<protein>
    <recommendedName>
        <fullName evidence="1">Bifunctional protein GlmU</fullName>
    </recommendedName>
    <domain>
        <recommendedName>
            <fullName evidence="1">UDP-N-acetylglucosamine pyrophosphorylase</fullName>
            <ecNumber evidence="1">2.7.7.23</ecNumber>
        </recommendedName>
        <alternativeName>
            <fullName evidence="1">N-acetylglucosamine-1-phosphate uridyltransferase</fullName>
        </alternativeName>
    </domain>
    <domain>
        <recommendedName>
            <fullName evidence="1">Glucosamine-1-phosphate N-acetyltransferase</fullName>
            <ecNumber evidence="1">2.3.1.157</ecNumber>
        </recommendedName>
    </domain>
</protein>
<sequence>MTQDIVILAAGKGSRMKSAFSKVLHKVGGIAMVRRVLTTASTLPESKLHLVVGHQGEQVEANCQDFSANIVWQNDPQGTGDALRRVAPFLQADGATLTLYGDVPLIRASTLEKMTALSNSNTLVLLTISLDNPTGYGRIVRNEQGKVTAIVEQKDASESQLAIKEVNTGILLAPNNHLQGWLAALTNNNAQGEYYLTDVIAMAARDGVDIVTVNPENEAEVAGVNDRVQLAALERELQNQQAVSLMQNGATLLDPSRIDIRGELTTGHDVIIDVNCIFEGKVVLGTGVEVGPNCHLKNCTIGDNTIIKSNTLIEESQVGEHCDIGPFARLRPGTQLANKAKIGNFVETKKAIIGEGSKVNHLSYIGDTEMGANVNVGAGTITCNYDGVNKHLTQVADNVFIGSNTSLVAPVQVAEGAMIAAGSTITKQVGENQLAFARARQTNKDNWPRPIKK</sequence>
<gene>
    <name evidence="1" type="primary">glmU</name>
    <name type="ordered locus">Mmwyl1_0771</name>
</gene>
<comment type="function">
    <text evidence="1">Catalyzes the last two sequential reactions in the de novo biosynthetic pathway for UDP-N-acetylglucosamine (UDP-GlcNAc). The C-terminal domain catalyzes the transfer of acetyl group from acetyl coenzyme A to glucosamine-1-phosphate (GlcN-1-P) to produce N-acetylglucosamine-1-phosphate (GlcNAc-1-P), which is converted into UDP-GlcNAc by the transfer of uridine 5-monophosphate (from uridine 5-triphosphate), a reaction catalyzed by the N-terminal domain.</text>
</comment>
<comment type="catalytic activity">
    <reaction evidence="1">
        <text>alpha-D-glucosamine 1-phosphate + acetyl-CoA = N-acetyl-alpha-D-glucosamine 1-phosphate + CoA + H(+)</text>
        <dbReference type="Rhea" id="RHEA:13725"/>
        <dbReference type="ChEBI" id="CHEBI:15378"/>
        <dbReference type="ChEBI" id="CHEBI:57287"/>
        <dbReference type="ChEBI" id="CHEBI:57288"/>
        <dbReference type="ChEBI" id="CHEBI:57776"/>
        <dbReference type="ChEBI" id="CHEBI:58516"/>
        <dbReference type="EC" id="2.3.1.157"/>
    </reaction>
</comment>
<comment type="catalytic activity">
    <reaction evidence="1">
        <text>N-acetyl-alpha-D-glucosamine 1-phosphate + UTP + H(+) = UDP-N-acetyl-alpha-D-glucosamine + diphosphate</text>
        <dbReference type="Rhea" id="RHEA:13509"/>
        <dbReference type="ChEBI" id="CHEBI:15378"/>
        <dbReference type="ChEBI" id="CHEBI:33019"/>
        <dbReference type="ChEBI" id="CHEBI:46398"/>
        <dbReference type="ChEBI" id="CHEBI:57705"/>
        <dbReference type="ChEBI" id="CHEBI:57776"/>
        <dbReference type="EC" id="2.7.7.23"/>
    </reaction>
</comment>
<comment type="cofactor">
    <cofactor evidence="1">
        <name>Mg(2+)</name>
        <dbReference type="ChEBI" id="CHEBI:18420"/>
    </cofactor>
    <text evidence="1">Binds 1 Mg(2+) ion per subunit.</text>
</comment>
<comment type="pathway">
    <text evidence="1">Nucleotide-sugar biosynthesis; UDP-N-acetyl-alpha-D-glucosamine biosynthesis; N-acetyl-alpha-D-glucosamine 1-phosphate from alpha-D-glucosamine 6-phosphate (route II): step 2/2.</text>
</comment>
<comment type="pathway">
    <text evidence="1">Nucleotide-sugar biosynthesis; UDP-N-acetyl-alpha-D-glucosamine biosynthesis; UDP-N-acetyl-alpha-D-glucosamine from N-acetyl-alpha-D-glucosamine 1-phosphate: step 1/1.</text>
</comment>
<comment type="pathway">
    <text evidence="1">Bacterial outer membrane biogenesis; LPS lipid A biosynthesis.</text>
</comment>
<comment type="subunit">
    <text evidence="1">Homotrimer.</text>
</comment>
<comment type="subcellular location">
    <subcellularLocation>
        <location evidence="1">Cytoplasm</location>
    </subcellularLocation>
</comment>
<comment type="similarity">
    <text evidence="1">In the N-terminal section; belongs to the N-acetylglucosamine-1-phosphate uridyltransferase family.</text>
</comment>
<comment type="similarity">
    <text evidence="1">In the C-terminal section; belongs to the transferase hexapeptide repeat family.</text>
</comment>